<proteinExistence type="inferred from homology"/>
<reference key="1">
    <citation type="journal article" date="2001" name="DNA Res.">
        <title>Complete genome sequence of an aerobic thermoacidophilic Crenarchaeon, Sulfolobus tokodaii strain7.</title>
        <authorList>
            <person name="Kawarabayasi Y."/>
            <person name="Hino Y."/>
            <person name="Horikawa H."/>
            <person name="Jin-no K."/>
            <person name="Takahashi M."/>
            <person name="Sekine M."/>
            <person name="Baba S."/>
            <person name="Ankai A."/>
            <person name="Kosugi H."/>
            <person name="Hosoyama A."/>
            <person name="Fukui S."/>
            <person name="Nagai Y."/>
            <person name="Nishijima K."/>
            <person name="Otsuka R."/>
            <person name="Nakazawa H."/>
            <person name="Takamiya M."/>
            <person name="Kato Y."/>
            <person name="Yoshizawa T."/>
            <person name="Tanaka T."/>
            <person name="Kudoh Y."/>
            <person name="Yamazaki J."/>
            <person name="Kushida N."/>
            <person name="Oguchi A."/>
            <person name="Aoki K."/>
            <person name="Masuda S."/>
            <person name="Yanagii M."/>
            <person name="Nishimura M."/>
            <person name="Yamagishi A."/>
            <person name="Oshima T."/>
            <person name="Kikuchi H."/>
        </authorList>
    </citation>
    <scope>NUCLEOTIDE SEQUENCE [LARGE SCALE GENOMIC DNA]</scope>
    <source>
        <strain>DSM 16993 / JCM 10545 / NBRC 100140 / 7</strain>
    </source>
</reference>
<dbReference type="EC" id="3.1.26.5" evidence="1"/>
<dbReference type="EMBL" id="BA000023">
    <property type="protein sequence ID" value="BAK54288.1"/>
    <property type="molecule type" value="Genomic_DNA"/>
</dbReference>
<dbReference type="SMR" id="Q975G4"/>
<dbReference type="STRING" id="273063.STK_04470"/>
<dbReference type="KEGG" id="sto:STK_04470"/>
<dbReference type="PATRIC" id="fig|273063.9.peg.519"/>
<dbReference type="eggNOG" id="arCOG01365">
    <property type="taxonomic scope" value="Archaea"/>
</dbReference>
<dbReference type="Proteomes" id="UP000001015">
    <property type="component" value="Chromosome"/>
</dbReference>
<dbReference type="GO" id="GO:0005737">
    <property type="term" value="C:cytoplasm"/>
    <property type="evidence" value="ECO:0007669"/>
    <property type="project" value="UniProtKB-SubCell"/>
</dbReference>
<dbReference type="GO" id="GO:0030677">
    <property type="term" value="C:ribonuclease P complex"/>
    <property type="evidence" value="ECO:0007669"/>
    <property type="project" value="UniProtKB-UniRule"/>
</dbReference>
<dbReference type="GO" id="GO:0004526">
    <property type="term" value="F:ribonuclease P activity"/>
    <property type="evidence" value="ECO:0007669"/>
    <property type="project" value="UniProtKB-UniRule"/>
</dbReference>
<dbReference type="GO" id="GO:0001682">
    <property type="term" value="P:tRNA 5'-leader removal"/>
    <property type="evidence" value="ECO:0007669"/>
    <property type="project" value="UniProtKB-UniRule"/>
</dbReference>
<dbReference type="Gene3D" id="3.30.70.3250">
    <property type="entry name" value="Ribonuclease P, Pop5 subunit"/>
    <property type="match status" value="1"/>
</dbReference>
<dbReference type="HAMAP" id="MF_00755">
    <property type="entry name" value="RNase_P_2"/>
    <property type="match status" value="1"/>
</dbReference>
<dbReference type="InterPro" id="IPR002759">
    <property type="entry name" value="Pop5/Rpp14/Rnp2-like"/>
</dbReference>
<dbReference type="InterPro" id="IPR038085">
    <property type="entry name" value="Rnp2-like_sf"/>
</dbReference>
<dbReference type="Pfam" id="PF01900">
    <property type="entry name" value="RNase_P_Rpp14"/>
    <property type="match status" value="1"/>
</dbReference>
<dbReference type="SUPFAM" id="SSF160350">
    <property type="entry name" value="Rnp2-like"/>
    <property type="match status" value="1"/>
</dbReference>
<organism>
    <name type="scientific">Sulfurisphaera tokodaii (strain DSM 16993 / JCM 10545 / NBRC 100140 / 7)</name>
    <name type="common">Sulfolobus tokodaii</name>
    <dbReference type="NCBI Taxonomy" id="273063"/>
    <lineage>
        <taxon>Archaea</taxon>
        <taxon>Thermoproteota</taxon>
        <taxon>Thermoprotei</taxon>
        <taxon>Sulfolobales</taxon>
        <taxon>Sulfolobaceae</taxon>
        <taxon>Sulfurisphaera</taxon>
    </lineage>
</organism>
<protein>
    <recommendedName>
        <fullName evidence="1">Ribonuclease P protein component 2</fullName>
        <shortName evidence="1">RNase P component 2</shortName>
        <ecNumber evidence="1">3.1.26.5</ecNumber>
    </recommendedName>
    <alternativeName>
        <fullName evidence="1">Pop5</fullName>
    </alternativeName>
</protein>
<feature type="chain" id="PRO_0000140030" description="Ribonuclease P protein component 2">
    <location>
        <begin position="1"/>
        <end position="123"/>
    </location>
</feature>
<evidence type="ECO:0000255" key="1">
    <source>
        <dbReference type="HAMAP-Rule" id="MF_00755"/>
    </source>
</evidence>
<keyword id="KW-0963">Cytoplasm</keyword>
<keyword id="KW-0255">Endonuclease</keyword>
<keyword id="KW-0378">Hydrolase</keyword>
<keyword id="KW-0540">Nuclease</keyword>
<keyword id="KW-1185">Reference proteome</keyword>
<keyword id="KW-0819">tRNA processing</keyword>
<accession>Q975G4</accession>
<accession>F9VMZ1</accession>
<gene>
    <name evidence="1" type="primary">rnp2</name>
    <name type="ordered locus">STK_04470</name>
</gene>
<sequence length="123" mass="14431">MVIFSYRTRIIYIKKIKNKRDTRAKRYVIFDIISEDNFEIREIEEAVRNSVKELGGKIWLDLSNPKVIMIYNNRGIISTNRIGYKIIIASLPLIKKIKNKEVLLVPRRTTGSLKRAKRLIGIE</sequence>
<name>RNP2_SULTO</name>
<comment type="function">
    <text evidence="1">Part of ribonuclease P, a protein complex that generates mature tRNA molecules by cleaving their 5'-ends.</text>
</comment>
<comment type="catalytic activity">
    <reaction evidence="1">
        <text>Endonucleolytic cleavage of RNA, removing 5'-extranucleotides from tRNA precursor.</text>
        <dbReference type="EC" id="3.1.26.5"/>
    </reaction>
</comment>
<comment type="subunit">
    <text evidence="1">Consists of a catalytic RNA component and at least 4-5 protein subunits.</text>
</comment>
<comment type="subcellular location">
    <subcellularLocation>
        <location evidence="1">Cytoplasm</location>
    </subcellularLocation>
</comment>
<comment type="similarity">
    <text evidence="1">Belongs to the eukaryotic/archaeal RNase P protein component 2 family.</text>
</comment>